<feature type="chain" id="PRO_0000383023" description="2-aminomuconic 6-semialdehyde dehydrogenase">
    <location>
        <begin position="1"/>
        <end position="491"/>
    </location>
</feature>
<feature type="active site" evidence="1">
    <location>
        <position position="252"/>
    </location>
</feature>
<feature type="active site" evidence="1">
    <location>
        <position position="286"/>
    </location>
</feature>
<feature type="strand" evidence="5">
    <location>
        <begin position="6"/>
        <end position="8"/>
    </location>
</feature>
<feature type="strand" evidence="5">
    <location>
        <begin position="11"/>
        <end position="13"/>
    </location>
</feature>
<feature type="strand" evidence="5">
    <location>
        <begin position="16"/>
        <end position="22"/>
    </location>
</feature>
<feature type="turn" evidence="5">
    <location>
        <begin position="24"/>
        <end position="26"/>
    </location>
</feature>
<feature type="strand" evidence="5">
    <location>
        <begin position="29"/>
        <end position="35"/>
    </location>
</feature>
<feature type="helix" evidence="5">
    <location>
        <begin position="38"/>
        <end position="52"/>
    </location>
</feature>
<feature type="helix" evidence="5">
    <location>
        <begin position="55"/>
        <end position="58"/>
    </location>
</feature>
<feature type="helix" evidence="5">
    <location>
        <begin position="61"/>
        <end position="77"/>
    </location>
</feature>
<feature type="helix" evidence="5">
    <location>
        <begin position="79"/>
        <end position="90"/>
    </location>
</feature>
<feature type="helix" evidence="5">
    <location>
        <begin position="94"/>
        <end position="97"/>
    </location>
</feature>
<feature type="turn" evidence="5">
    <location>
        <begin position="98"/>
        <end position="100"/>
    </location>
</feature>
<feature type="helix" evidence="5">
    <location>
        <begin position="101"/>
        <end position="118"/>
    </location>
</feature>
<feature type="strand" evidence="5">
    <location>
        <begin position="123"/>
        <end position="127"/>
    </location>
</feature>
<feature type="helix" evidence="5">
    <location>
        <begin position="129"/>
        <end position="131"/>
    </location>
</feature>
<feature type="strand" evidence="5">
    <location>
        <begin position="133"/>
        <end position="142"/>
    </location>
</feature>
<feature type="strand" evidence="5">
    <location>
        <begin position="144"/>
        <end position="149"/>
    </location>
</feature>
<feature type="strand" evidence="5">
    <location>
        <begin position="152"/>
        <end position="154"/>
    </location>
</feature>
<feature type="helix" evidence="5">
    <location>
        <begin position="155"/>
        <end position="168"/>
    </location>
</feature>
<feature type="strand" evidence="5">
    <location>
        <begin position="172"/>
        <end position="176"/>
    </location>
</feature>
<feature type="helix" evidence="5">
    <location>
        <begin position="183"/>
        <end position="195"/>
    </location>
</feature>
<feature type="strand" evidence="5">
    <location>
        <begin position="201"/>
        <end position="204"/>
    </location>
</feature>
<feature type="helix" evidence="5">
    <location>
        <begin position="213"/>
        <end position="219"/>
    </location>
</feature>
<feature type="strand" evidence="5">
    <location>
        <begin position="225"/>
        <end position="230"/>
    </location>
</feature>
<feature type="helix" evidence="5">
    <location>
        <begin position="232"/>
        <end position="243"/>
    </location>
</feature>
<feature type="turn" evidence="5">
    <location>
        <begin position="244"/>
        <end position="246"/>
    </location>
</feature>
<feature type="strand" evidence="5">
    <location>
        <begin position="249"/>
        <end position="252"/>
    </location>
</feature>
<feature type="strand" evidence="5">
    <location>
        <begin position="257"/>
        <end position="261"/>
    </location>
</feature>
<feature type="helix" evidence="5">
    <location>
        <begin position="267"/>
        <end position="279"/>
    </location>
</feature>
<feature type="helix" evidence="5">
    <location>
        <begin position="280"/>
        <end position="283"/>
    </location>
</feature>
<feature type="strand" evidence="5">
    <location>
        <begin position="289"/>
        <end position="295"/>
    </location>
</feature>
<feature type="helix" evidence="5">
    <location>
        <begin position="296"/>
        <end position="298"/>
    </location>
</feature>
<feature type="helix" evidence="5">
    <location>
        <begin position="299"/>
        <end position="311"/>
    </location>
</feature>
<feature type="helix" evidence="5">
    <location>
        <begin position="331"/>
        <end position="346"/>
    </location>
</feature>
<feature type="strand" evidence="5">
    <location>
        <begin position="350"/>
        <end position="353"/>
    </location>
</feature>
<feature type="helix" evidence="5">
    <location>
        <begin position="363"/>
        <end position="366"/>
    </location>
</feature>
<feature type="strand" evidence="5">
    <location>
        <begin position="373"/>
        <end position="377"/>
    </location>
</feature>
<feature type="helix" evidence="5">
    <location>
        <begin position="383"/>
        <end position="386"/>
    </location>
</feature>
<feature type="strand" evidence="5">
    <location>
        <begin position="391"/>
        <end position="399"/>
    </location>
</feature>
<feature type="helix" evidence="5">
    <location>
        <begin position="402"/>
        <end position="410"/>
    </location>
</feature>
<feature type="strand" evidence="5">
    <location>
        <begin position="416"/>
        <end position="421"/>
    </location>
</feature>
<feature type="helix" evidence="5">
    <location>
        <begin position="425"/>
        <end position="434"/>
    </location>
</feature>
<feature type="strand" evidence="5">
    <location>
        <begin position="437"/>
        <end position="443"/>
    </location>
</feature>
<feature type="helix" evidence="5">
    <location>
        <begin position="458"/>
        <end position="460"/>
    </location>
</feature>
<feature type="strand" evidence="5">
    <location>
        <begin position="461"/>
        <end position="463"/>
    </location>
</feature>
<feature type="helix" evidence="5">
    <location>
        <begin position="467"/>
        <end position="473"/>
    </location>
</feature>
<feature type="strand" evidence="5">
    <location>
        <begin position="475"/>
        <end position="484"/>
    </location>
</feature>
<keyword id="KW-0002">3D-structure</keyword>
<keyword id="KW-0058">Aromatic hydrocarbons catabolism</keyword>
<keyword id="KW-0903">Direct protein sequencing</keyword>
<keyword id="KW-0520">NAD</keyword>
<keyword id="KW-0560">Oxidoreductase</keyword>
<organism>
    <name type="scientific">Pseudomonas sp</name>
    <dbReference type="NCBI Taxonomy" id="306"/>
    <lineage>
        <taxon>Bacteria</taxon>
        <taxon>Pseudomonadati</taxon>
        <taxon>Pseudomonadota</taxon>
        <taxon>Gammaproteobacteria</taxon>
        <taxon>Pseudomonadales</taxon>
        <taxon>Pseudomonadaceae</taxon>
        <taxon>Pseudomonas</taxon>
    </lineage>
</organism>
<comment type="function">
    <text evidence="3">Involved in the modified meta-cleavage pathway for 2-aminophenol catabolism. The enzyme is also active toward 2-hydroxymuconic 6-semialdehyde, acetaldehyde, propionaldehyde, and butyraldehyde.</text>
</comment>
<comment type="catalytic activity">
    <reaction evidence="2">
        <text>2-aminomuconate 6-semialdehyde + NAD(+) + H2O = (2Z,4E)-2-aminomuconate + NADH + 2 H(+)</text>
        <dbReference type="Rhea" id="RHEA:14469"/>
        <dbReference type="ChEBI" id="CHEBI:15377"/>
        <dbReference type="ChEBI" id="CHEBI:15378"/>
        <dbReference type="ChEBI" id="CHEBI:57540"/>
        <dbReference type="ChEBI" id="CHEBI:57945"/>
        <dbReference type="ChEBI" id="CHEBI:77634"/>
        <dbReference type="ChEBI" id="CHEBI:77859"/>
        <dbReference type="EC" id="1.2.1.32"/>
    </reaction>
</comment>
<comment type="activity regulation">
    <text evidence="2">Strongly inhibited by Ag(+) and Hg(+), and comnpletely inhibited by p-chloromercuribenzoic acid.</text>
</comment>
<comment type="biophysicochemical properties">
    <phDependence>
        <text evidence="2">Optimum pH is 7.5. Stable in the range of pH 6.0-8.0.</text>
    </phDependence>
    <temperatureDependence>
        <text evidence="2">After heating at 40 degrees Celsius, the remaining activity is 40% of the original activity.</text>
    </temperatureDependence>
</comment>
<comment type="subunit">
    <text evidence="2">Homotrimer.</text>
</comment>
<comment type="similarity">
    <text evidence="4">Belongs to the aldehyde dehydrogenase family.</text>
</comment>
<protein>
    <recommendedName>
        <fullName>2-aminomuconic 6-semialdehyde dehydrogenase</fullName>
        <ecNumber>1.2.1.32</ecNumber>
    </recommendedName>
    <alternativeName>
        <fullName>Aminomuconate-semialdehyde dehydrogenase</fullName>
    </alternativeName>
</protein>
<accession>Q9KWS5</accession>
<proteinExistence type="evidence at protein level"/>
<evidence type="ECO:0000250" key="1"/>
<evidence type="ECO:0000269" key="2">
    <source>
    </source>
</evidence>
<evidence type="ECO:0000269" key="3">
    <source>
    </source>
</evidence>
<evidence type="ECO:0000305" key="4"/>
<evidence type="ECO:0007829" key="5">
    <source>
        <dbReference type="PDB" id="7BZV"/>
    </source>
</evidence>
<sequence length="491" mass="53722">MKQYRNFVDGKWVESSKTFQDVTPIDGSVVAVVHEADRDLVDAAVKAGHRALEGEWGRTTAAQRVDWLRRIANEMERRQQDFLDAEMADTGKPLSMAATIDIPRGIANFRNFADILATAPVDSHRLDLPDGAYALNYAARKPLGVVGVISPWNLPLLLLTWKVAPALACGNAVVVKPSEDTPGTATLLAEVMEAVGIPPGVFNLVHGFGPNSAGEFISQHPDISAITFTGESKTGSTIMRAAAEGVKPVSFELGGKNAAVIFADCDFEKMLDGMMRALFLNSGQVCLCSERVYVERPIFDRFCVALAERIKALKVDWPHETDTQMGPLISSKHRDKVLSYFELARQEGATFLAGGGVPRFGDERDNGAWVEPTVIAGLSDDARVVREEIFGPICHVTPFDSESEVIRRANDTRYGLAATIWTTNLSRAHRVSELMRVGISWVNTWFLRDLRTPFGGAGLSGIGREGGMHSLNFYSELTNVCVRIDKESPDV</sequence>
<dbReference type="EC" id="1.2.1.32"/>
<dbReference type="EMBL" id="AB020521">
    <property type="protein sequence ID" value="BAB03533.1"/>
    <property type="molecule type" value="Genomic_DNA"/>
</dbReference>
<dbReference type="PDB" id="7BZV">
    <property type="method" value="X-ray"/>
    <property type="resolution" value="1.99 A"/>
    <property type="chains" value="A/B=1-491"/>
</dbReference>
<dbReference type="PDBsum" id="7BZV"/>
<dbReference type="SASBDB" id="Q9KWS5"/>
<dbReference type="SMR" id="Q9KWS5"/>
<dbReference type="BioCyc" id="MetaCyc:MONOMER-14741"/>
<dbReference type="GO" id="GO:0047102">
    <property type="term" value="F:aminomuconate-semialdehyde dehydrogenase activity"/>
    <property type="evidence" value="ECO:0007669"/>
    <property type="project" value="UniProtKB-EC"/>
</dbReference>
<dbReference type="GO" id="GO:0009056">
    <property type="term" value="P:catabolic process"/>
    <property type="evidence" value="ECO:0007669"/>
    <property type="project" value="UniProtKB-KW"/>
</dbReference>
<dbReference type="CDD" id="cd07093">
    <property type="entry name" value="ALDH_F8_HMSADH"/>
    <property type="match status" value="1"/>
</dbReference>
<dbReference type="FunFam" id="3.40.309.10:FF:000012">
    <property type="entry name" value="Betaine aldehyde dehydrogenase"/>
    <property type="match status" value="1"/>
</dbReference>
<dbReference type="FunFam" id="3.40.605.10:FF:000007">
    <property type="entry name" value="NAD/NADP-dependent betaine aldehyde dehydrogenase"/>
    <property type="match status" value="1"/>
</dbReference>
<dbReference type="Gene3D" id="3.40.605.10">
    <property type="entry name" value="Aldehyde Dehydrogenase, Chain A, domain 1"/>
    <property type="match status" value="1"/>
</dbReference>
<dbReference type="Gene3D" id="3.40.309.10">
    <property type="entry name" value="Aldehyde Dehydrogenase, Chain A, domain 2"/>
    <property type="match status" value="1"/>
</dbReference>
<dbReference type="InterPro" id="IPR016161">
    <property type="entry name" value="Ald_DH/histidinol_DH"/>
</dbReference>
<dbReference type="InterPro" id="IPR016163">
    <property type="entry name" value="Ald_DH_C"/>
</dbReference>
<dbReference type="InterPro" id="IPR016160">
    <property type="entry name" value="Ald_DH_CS_CYS"/>
</dbReference>
<dbReference type="InterPro" id="IPR029510">
    <property type="entry name" value="Ald_DH_CS_GLU"/>
</dbReference>
<dbReference type="InterPro" id="IPR016162">
    <property type="entry name" value="Ald_DH_N"/>
</dbReference>
<dbReference type="InterPro" id="IPR015590">
    <property type="entry name" value="Aldehyde_DH_dom"/>
</dbReference>
<dbReference type="InterPro" id="IPR017628">
    <property type="entry name" value="OHmuconic_semiald_DH"/>
</dbReference>
<dbReference type="NCBIfam" id="TIGR03216">
    <property type="entry name" value="OH_muco_semi_DH"/>
    <property type="match status" value="1"/>
</dbReference>
<dbReference type="PANTHER" id="PTHR43720">
    <property type="entry name" value="2-AMINOMUCONIC SEMIALDEHYDE DEHYDROGENASE"/>
    <property type="match status" value="1"/>
</dbReference>
<dbReference type="PANTHER" id="PTHR43720:SF2">
    <property type="entry name" value="2-AMINOMUCONIC SEMIALDEHYDE DEHYDROGENASE"/>
    <property type="match status" value="1"/>
</dbReference>
<dbReference type="Pfam" id="PF00171">
    <property type="entry name" value="Aldedh"/>
    <property type="match status" value="1"/>
</dbReference>
<dbReference type="SUPFAM" id="SSF53720">
    <property type="entry name" value="ALDH-like"/>
    <property type="match status" value="1"/>
</dbReference>
<dbReference type="PROSITE" id="PS00070">
    <property type="entry name" value="ALDEHYDE_DEHYDR_CYS"/>
    <property type="match status" value="1"/>
</dbReference>
<dbReference type="PROSITE" id="PS00687">
    <property type="entry name" value="ALDEHYDE_DEHYDR_GLU"/>
    <property type="match status" value="1"/>
</dbReference>
<name>AMNC_PSESP</name>
<reference key="1">
    <citation type="journal article" date="1997" name="J. Biol. Chem.">
        <title>Novel genes encoding 2-aminophenol 1,6-dioxygenase from Pseudomonas species AP-3 growing on 2-aminophenol and catalytic properties of the purified enzyme.</title>
        <authorList>
            <person name="Takenaka S."/>
            <person name="Murakami S."/>
            <person name="Shinke R."/>
            <person name="Hatakeyama K."/>
            <person name="Yukawa H."/>
            <person name="Aoki K."/>
        </authorList>
    </citation>
    <scope>NUCLEOTIDE SEQUENCE [GENOMIC DNA]</scope>
    <scope>FUNCTION</scope>
    <source>
        <strain>AP-3</strain>
    </source>
</reference>
<reference key="2">
    <citation type="journal article" date="2000" name="Arch. Microbiol.">
        <title>Complete nucleotide sequence and functional analysis of the genes for 2-aminophenol metabolism from Pseudomonas sp. AP-3.</title>
        <authorList>
            <person name="Takenaka S."/>
            <person name="Murakami S."/>
            <person name="Kim Y.J."/>
            <person name="Aoki K."/>
        </authorList>
    </citation>
    <scope>NUCLEOTIDE SEQUENCE [GENOMIC DNA]</scope>
    <scope>PROTEIN SEQUENCE OF 1-10</scope>
    <scope>CATALYTIC ACTIVITY</scope>
    <scope>BIOPHYSICOCHEMICAL PROPERTIES</scope>
    <scope>SUBUNIT</scope>
    <scope>SUBSTRATE SPECIFICITY</scope>
    <scope>ACTIVITY REGULATION</scope>
    <source>
        <strain>AP-3</strain>
    </source>
</reference>
<gene>
    <name type="primary">amnC</name>
</gene>